<dbReference type="EMBL" id="FO081312">
    <property type="protein sequence ID" value="CCD70704.1"/>
    <property type="molecule type" value="Genomic_DNA"/>
</dbReference>
<dbReference type="PIR" id="S44643">
    <property type="entry name" value="S44643"/>
</dbReference>
<dbReference type="RefSeq" id="NP_498469.1">
    <property type="nucleotide sequence ID" value="NM_066068.1"/>
</dbReference>
<dbReference type="SMR" id="P41884"/>
<dbReference type="BioGRID" id="50178">
    <property type="interactions" value="1"/>
</dbReference>
<dbReference type="DIP" id="DIP-24763N"/>
<dbReference type="FunCoup" id="P41884">
    <property type="interactions" value="69"/>
</dbReference>
<dbReference type="STRING" id="6239.F37A4.6.1"/>
<dbReference type="PaxDb" id="6239-F37A4.6"/>
<dbReference type="EnsemblMetazoa" id="F37A4.6.1">
    <property type="protein sequence ID" value="F37A4.6.1"/>
    <property type="gene ID" value="WBGene00018136"/>
</dbReference>
<dbReference type="GeneID" id="185405"/>
<dbReference type="KEGG" id="cel:CELE_F37A4.6"/>
<dbReference type="UCSC" id="F37A4.6">
    <property type="organism name" value="c. elegans"/>
</dbReference>
<dbReference type="AGR" id="WB:WBGene00018136"/>
<dbReference type="CTD" id="185405"/>
<dbReference type="WormBase" id="F37A4.6">
    <property type="protein sequence ID" value="CE00706"/>
    <property type="gene ID" value="WBGene00018136"/>
</dbReference>
<dbReference type="eggNOG" id="ENOG502TGFM">
    <property type="taxonomic scope" value="Eukaryota"/>
</dbReference>
<dbReference type="HOGENOM" id="CLU_710247_0_0_1"/>
<dbReference type="InParanoid" id="P41884"/>
<dbReference type="OMA" id="MLFFVNE"/>
<dbReference type="OrthoDB" id="5855276at2759"/>
<dbReference type="PRO" id="PR:P41884"/>
<dbReference type="Proteomes" id="UP000001940">
    <property type="component" value="Chromosome III"/>
</dbReference>
<dbReference type="Bgee" id="WBGene00018136">
    <property type="expression patterns" value="Expressed in larva and 1 other cell type or tissue"/>
</dbReference>
<evidence type="ECO:0000256" key="1">
    <source>
        <dbReference type="SAM" id="MobiDB-lite"/>
    </source>
</evidence>
<protein>
    <recommendedName>
        <fullName>Uncharacterized protein F37A4.6</fullName>
    </recommendedName>
</protein>
<sequence>MLRPPMTKLVISNRESHRECEQVLQIGECAIVRSSSGEPWQLLNNGNSDSIDYALLQDILYEGYRLSTIYNIKSHTKSMKRLRRKLASIFSNSNFLLPLSKDGSSSSSQPHFYLSPSNSSLFDARKSSRSRGAVIKSPSTINIEKNRHSSNSGENQKMRLNLSMSTGNLCRAGVVRTPYPTSKQLHFDNDDGDEEDDTDDEGEADLVSIKTRSGRRNVLKSPPPPERIPSSMGASDAEEIDIKSHMKPLSVKIPANIFKTPTLDIPVDDDAEIDADVFPLPPPTPVNLKHGLFSIPSGRNSESARSRQTKRSPFGSVTSRTSSLDRRMSLSCLEDTSNYQKTQYLVFPLRTSSKKPYLLKFPEDMQEEDEKHNGSVWGSDTSLEEEIKV</sequence>
<feature type="chain" id="PRO_0000065328" description="Uncharacterized protein F37A4.6">
    <location>
        <begin position="1"/>
        <end position="389"/>
    </location>
</feature>
<feature type="region of interest" description="Disordered" evidence="1">
    <location>
        <begin position="119"/>
        <end position="156"/>
    </location>
</feature>
<feature type="region of interest" description="Disordered" evidence="1">
    <location>
        <begin position="180"/>
        <end position="233"/>
    </location>
</feature>
<feature type="region of interest" description="Disordered" evidence="1">
    <location>
        <begin position="294"/>
        <end position="321"/>
    </location>
</feature>
<feature type="region of interest" description="Disordered" evidence="1">
    <location>
        <begin position="362"/>
        <end position="389"/>
    </location>
</feature>
<feature type="compositionally biased region" description="Polar residues" evidence="1">
    <location>
        <begin position="137"/>
        <end position="155"/>
    </location>
</feature>
<feature type="compositionally biased region" description="Acidic residues" evidence="1">
    <location>
        <begin position="190"/>
        <end position="204"/>
    </location>
</feature>
<proteinExistence type="predicted"/>
<keyword id="KW-1185">Reference proteome</keyword>
<organism>
    <name type="scientific">Caenorhabditis elegans</name>
    <dbReference type="NCBI Taxonomy" id="6239"/>
    <lineage>
        <taxon>Eukaryota</taxon>
        <taxon>Metazoa</taxon>
        <taxon>Ecdysozoa</taxon>
        <taxon>Nematoda</taxon>
        <taxon>Chromadorea</taxon>
        <taxon>Rhabditida</taxon>
        <taxon>Rhabditina</taxon>
        <taxon>Rhabditomorpha</taxon>
        <taxon>Rhabditoidea</taxon>
        <taxon>Rhabditidae</taxon>
        <taxon>Peloderinae</taxon>
        <taxon>Caenorhabditis</taxon>
    </lineage>
</organism>
<reference key="1">
    <citation type="journal article" date="1998" name="Science">
        <title>Genome sequence of the nematode C. elegans: a platform for investigating biology.</title>
        <authorList>
            <consortium name="The C. elegans sequencing consortium"/>
        </authorList>
    </citation>
    <scope>NUCLEOTIDE SEQUENCE [LARGE SCALE GENOMIC DNA]</scope>
    <source>
        <strain>Bristol N2</strain>
    </source>
</reference>
<gene>
    <name type="ORF">F37A4.6</name>
</gene>
<name>YPT6_CAEEL</name>
<accession>P41884</accession>